<feature type="chain" id="PRO_0000233123" description="Dual serine/threonine and tyrosine protein kinase">
    <location>
        <begin position="1"/>
        <end position="885"/>
    </location>
</feature>
<feature type="domain" description="Protein kinase" evidence="3">
    <location>
        <begin position="614"/>
        <end position="868"/>
    </location>
</feature>
<feature type="active site" description="Proton acceptor" evidence="3 4">
    <location>
        <position position="739"/>
    </location>
</feature>
<feature type="binding site" evidence="3">
    <location>
        <begin position="620"/>
        <end position="628"/>
    </location>
    <ligand>
        <name>ATP</name>
        <dbReference type="ChEBI" id="CHEBI:30616"/>
    </ligand>
</feature>
<feature type="binding site" evidence="3">
    <location>
        <position position="643"/>
    </location>
    <ligand>
        <name>ATP</name>
        <dbReference type="ChEBI" id="CHEBI:30616"/>
    </ligand>
</feature>
<feature type="splice variant" id="VSP_018040" description="In isoform 2." evidence="6">
    <location>
        <begin position="483"/>
        <end position="510"/>
    </location>
</feature>
<feature type="sequence conflict" description="In Ref. 1; AAP42423." evidence="7" ref="1">
    <original>P</original>
    <variation>L</variation>
    <location>
        <position position="467"/>
    </location>
</feature>
<proteinExistence type="evidence at transcript level"/>
<protein>
    <recommendedName>
        <fullName>Dual serine/threonine and tyrosine protein kinase</fullName>
        <ecNumber>2.7.12.1</ecNumber>
    </recommendedName>
    <alternativeName>
        <fullName>Dusty protein kinase</fullName>
        <shortName>Dusty PK</shortName>
    </alternativeName>
    <alternativeName>
        <fullName>Receptor-interacting serine/threonine-protein kinase 5</fullName>
    </alternativeName>
</protein>
<sequence length="885" mass="99548">MENPQKPRELTRAFNHYNKHSGFLKKNLKETILFFREIRQNHSNTCAAAEPGQLSCISFPRQDEEYLQNVVSSAPYILILGQDCSARYQLLNCLLGERLLPLGPEAGGACGAEGGACRRRKLCFTHGRQTRLSLALPGQYELVHQLAAHCGRWDTVPRQDLEIQECEDPAQRLAELEITLHHTLLQEVKIMVLPCRNVQPLEEALEDCKRGILPIVLYAVSRESLSAQQLEDLQTLRESLPFPVCFIRVSDGGGGGALFTQLASLQLISASAGNCACGAPAAQSAGRMQGVLCDSLERLQRVLVPFTRQVLQNQQVEAATLLNTIHCRCLDLFIIQAFDMQRDLQITPRRLEYTREKEGELFCSLMAIANRKQEEMKEMIVETLSSMKEQLLEDAQNLDFTDIIMSSNGEPVSSKDIKVCISQIQDLIVNRLNQAVANKLTNSVDYLRESFVGTLERCLGSLEKSTPESCAHNVTSNHLKQILNAAYHVEVTFHSGSSVTRLFWEQIKQIIHRITWVNPPAITAEWKRKVAQDAIESLSAAKLAKSICSQFRTRLNSSHEAFAASLRQLEEGHTGRLERTEDLWLRVRKDHAPRLARLSLESRSLRDILLHGKPKLGRELGRGQYGVVYLCDSWAGRHPCALKSVVPPDDKHWNDLALEFHYTRSLPKHERLVNLHGSVIDHSYSGGSSIAVLLIMERLHRDLYTGLKAGLSLKERLLIALDVVEGIRFLHSQGLLHRDIKLKNVLLDKQNRAKITDLGFCKPEAMMSGSIVGTPIHMAPELFTGKYDNSVDVYAFGILFWYLCSGSVKLPEAFEKCASKDQLWTNVKKGCRPERLPVFDEECWQLMEACWNGDPSQRPLLGIVQPGLQSIMERLCGEKSLEDSN</sequence>
<accession>Q4VSN1</accession>
<accession>Q0VFW4</accession>
<accession>Q5VJL5</accession>
<accession>Q6NWI9</accession>
<accession>Q6XUW8</accession>
<evidence type="ECO:0000250" key="1">
    <source>
        <dbReference type="UniProtKB" id="Q6XUX1"/>
    </source>
</evidence>
<evidence type="ECO:0000250" key="2">
    <source>
        <dbReference type="UniProtKB" id="Q6XUX3"/>
    </source>
</evidence>
<evidence type="ECO:0000255" key="3">
    <source>
        <dbReference type="PROSITE-ProRule" id="PRU00159"/>
    </source>
</evidence>
<evidence type="ECO:0000255" key="4">
    <source>
        <dbReference type="PROSITE-ProRule" id="PRU10027"/>
    </source>
</evidence>
<evidence type="ECO:0000269" key="5">
    <source>
    </source>
</evidence>
<evidence type="ECO:0000303" key="6">
    <source>
    </source>
</evidence>
<evidence type="ECO:0000305" key="7"/>
<gene>
    <name type="primary">dstyk</name>
    <name type="synonym">ripk5</name>
</gene>
<comment type="function">
    <text evidence="2 5">May act as a positive regulator of ERK phosphorylation downstream of fibroblast growth factor-receptor activation. May induce both caspase-dependent apoptosis and caspase-independent cell death (By similarity). Plays a role in the embryonic development.</text>
</comment>
<comment type="catalytic activity">
    <reaction>
        <text>L-seryl-[protein] + ATP = O-phospho-L-seryl-[protein] + ADP + H(+)</text>
        <dbReference type="Rhea" id="RHEA:17989"/>
        <dbReference type="Rhea" id="RHEA-COMP:9863"/>
        <dbReference type="Rhea" id="RHEA-COMP:11604"/>
        <dbReference type="ChEBI" id="CHEBI:15378"/>
        <dbReference type="ChEBI" id="CHEBI:29999"/>
        <dbReference type="ChEBI" id="CHEBI:30616"/>
        <dbReference type="ChEBI" id="CHEBI:83421"/>
        <dbReference type="ChEBI" id="CHEBI:456216"/>
        <dbReference type="EC" id="2.7.12.1"/>
    </reaction>
</comment>
<comment type="catalytic activity">
    <reaction>
        <text>L-threonyl-[protein] + ATP = O-phospho-L-threonyl-[protein] + ADP + H(+)</text>
        <dbReference type="Rhea" id="RHEA:46608"/>
        <dbReference type="Rhea" id="RHEA-COMP:11060"/>
        <dbReference type="Rhea" id="RHEA-COMP:11605"/>
        <dbReference type="ChEBI" id="CHEBI:15378"/>
        <dbReference type="ChEBI" id="CHEBI:30013"/>
        <dbReference type="ChEBI" id="CHEBI:30616"/>
        <dbReference type="ChEBI" id="CHEBI:61977"/>
        <dbReference type="ChEBI" id="CHEBI:456216"/>
        <dbReference type="EC" id="2.7.12.1"/>
    </reaction>
</comment>
<comment type="catalytic activity">
    <reaction>
        <text>L-tyrosyl-[protein] + ATP = O-phospho-L-tyrosyl-[protein] + ADP + H(+)</text>
        <dbReference type="Rhea" id="RHEA:10596"/>
        <dbReference type="Rhea" id="RHEA-COMP:10136"/>
        <dbReference type="Rhea" id="RHEA-COMP:20101"/>
        <dbReference type="ChEBI" id="CHEBI:15378"/>
        <dbReference type="ChEBI" id="CHEBI:30616"/>
        <dbReference type="ChEBI" id="CHEBI:46858"/>
        <dbReference type="ChEBI" id="CHEBI:61978"/>
        <dbReference type="ChEBI" id="CHEBI:456216"/>
        <dbReference type="EC" id="2.7.12.1"/>
    </reaction>
</comment>
<comment type="subcellular location">
    <subcellularLocation>
        <location evidence="1">Cytoplasm</location>
    </subcellularLocation>
    <subcellularLocation>
        <location evidence="1">Cell membrane</location>
    </subcellularLocation>
    <subcellularLocation>
        <location evidence="1">Apical cell membrane</location>
    </subcellularLocation>
    <subcellularLocation>
        <location evidence="1">Basolateral cell membrane</location>
    </subcellularLocation>
    <subcellularLocation>
        <location evidence="1">Cell junction</location>
    </subcellularLocation>
</comment>
<comment type="alternative products">
    <event type="alternative splicing"/>
    <isoform>
        <id>Q4VSN1-1</id>
        <name>1</name>
        <sequence type="displayed"/>
    </isoform>
    <isoform>
        <id>Q4VSN1-2</id>
        <name>2</name>
        <sequence type="described" ref="VSP_018040"/>
    </isoform>
</comment>
<comment type="disruption phenotype">
    <text evidence="5">Morpholino knockdown of the protein causes growth retardation, as evidenced by small fins, abnormal morphogenesis of the tail, and loss of heartbeat. Pericardial effusion was evident in 5-day-old morphant larvae.</text>
</comment>
<comment type="similarity">
    <text evidence="3">Belongs to the protein kinase superfamily. Ser/Thr protein kinase family.</text>
</comment>
<keyword id="KW-0025">Alternative splicing</keyword>
<keyword id="KW-0067">ATP-binding</keyword>
<keyword id="KW-0965">Cell junction</keyword>
<keyword id="KW-1003">Cell membrane</keyword>
<keyword id="KW-0963">Cytoplasm</keyword>
<keyword id="KW-0217">Developmental protein</keyword>
<keyword id="KW-0418">Kinase</keyword>
<keyword id="KW-0472">Membrane</keyword>
<keyword id="KW-0547">Nucleotide-binding</keyword>
<keyword id="KW-1185">Reference proteome</keyword>
<keyword id="KW-0723">Serine/threonine-protein kinase</keyword>
<keyword id="KW-0808">Transferase</keyword>
<keyword id="KW-0829">Tyrosine-protein kinase</keyword>
<organism>
    <name type="scientific">Danio rerio</name>
    <name type="common">Zebrafish</name>
    <name type="synonym">Brachydanio rerio</name>
    <dbReference type="NCBI Taxonomy" id="7955"/>
    <lineage>
        <taxon>Eukaryota</taxon>
        <taxon>Metazoa</taxon>
        <taxon>Chordata</taxon>
        <taxon>Craniata</taxon>
        <taxon>Vertebrata</taxon>
        <taxon>Euteleostomi</taxon>
        <taxon>Actinopterygii</taxon>
        <taxon>Neopterygii</taxon>
        <taxon>Teleostei</taxon>
        <taxon>Ostariophysi</taxon>
        <taxon>Cypriniformes</taxon>
        <taxon>Danionidae</taxon>
        <taxon>Danioninae</taxon>
        <taxon>Danio</taxon>
    </lineage>
</organism>
<reference key="1">
    <citation type="journal article" date="2006" name="Biochim. Biophys. Acta">
        <title>Dusty protein kinases: primary structure, gene evolution, tissue specific expression and unique features of the catalytic domain.</title>
        <authorList>
            <person name="Peng J."/>
            <person name="Dong W."/>
            <person name="Chen Y."/>
            <person name="Mo R."/>
            <person name="Cheng J.-F."/>
            <person name="Hui C.-C."/>
            <person name="Mohandas N."/>
            <person name="Huang C.-H."/>
        </authorList>
    </citation>
    <scope>NUCLEOTIDE SEQUENCE [MRNA] (ISOFORMS 1 AND 2)</scope>
</reference>
<reference key="2">
    <citation type="submission" date="2006-07" db="EMBL/GenBank/DDBJ databases">
        <authorList>
            <consortium name="NIH - Zebrafish Gene Collection (ZGC) project"/>
        </authorList>
    </citation>
    <scope>NUCLEOTIDE SEQUENCE [LARGE SCALE MRNA]</scope>
    <source>
        <tissue>Eye</tissue>
        <tissue>Kidney</tissue>
    </source>
</reference>
<reference key="3">
    <citation type="journal article" date="2013" name="N. Engl. J. Med.">
        <title>Mutations in DSTYK and dominant urinary tract malformations.</title>
        <authorList>
            <person name="Sanna-Cherchi S."/>
            <person name="Sampogna R.V."/>
            <person name="Papeta N."/>
            <person name="Burgess K.E."/>
            <person name="Nees S.N."/>
            <person name="Perry B.J."/>
            <person name="Choi M."/>
            <person name="Bodria M."/>
            <person name="Liu Y."/>
            <person name="Weng P.L."/>
            <person name="Lozanovski V.J."/>
            <person name="Verbitsky M."/>
            <person name="Lugani F."/>
            <person name="Sterken R."/>
            <person name="Paragas N."/>
            <person name="Caridi G."/>
            <person name="Carrea A."/>
            <person name="Dagnino M."/>
            <person name="Materna-Kiryluk A."/>
            <person name="Santamaria G."/>
            <person name="Murtas C."/>
            <person name="Ristoska-Bojkovska N."/>
            <person name="Izzi C."/>
            <person name="Kacak N."/>
            <person name="Bianco B."/>
            <person name="Giberti S."/>
            <person name="Gigante M."/>
            <person name="Piaggio G."/>
            <person name="Gesualdo L."/>
            <person name="Kosuljandic Vukic D."/>
            <person name="Vukojevic K."/>
            <person name="Saraga-Babic M."/>
            <person name="Saraga M."/>
            <person name="Gucev Z."/>
            <person name="Allegri L."/>
            <person name="Latos-Bielenska A."/>
            <person name="Casu D."/>
            <person name="State M."/>
            <person name="Scolari F."/>
            <person name="Ravazzolo R."/>
            <person name="Kiryluk K."/>
            <person name="Al-Awqati Q."/>
            <person name="D'Agati V.D."/>
            <person name="Drummond I.A."/>
            <person name="Tasic V."/>
            <person name="Lifton R.P."/>
            <person name="Ghiggeri G.M."/>
            <person name="Gharavi A.G."/>
        </authorList>
    </citation>
    <scope>FUNCTION</scope>
    <scope>DISRUPTION PHENOTYPE</scope>
</reference>
<dbReference type="EC" id="2.7.12.1"/>
<dbReference type="EMBL" id="AY208855">
    <property type="protein sequence ID" value="AAP42423.1"/>
    <property type="molecule type" value="mRNA"/>
</dbReference>
<dbReference type="EMBL" id="AY429681">
    <property type="protein sequence ID" value="AAS55397.1"/>
    <property type="molecule type" value="mRNA"/>
</dbReference>
<dbReference type="EMBL" id="AY641096">
    <property type="protein sequence ID" value="AAV40862.1"/>
    <property type="molecule type" value="mRNA"/>
</dbReference>
<dbReference type="EMBL" id="BC067573">
    <property type="protein sequence ID" value="AAH67573.1"/>
    <property type="molecule type" value="mRNA"/>
</dbReference>
<dbReference type="EMBL" id="BC118677">
    <property type="protein sequence ID" value="AAI18678.1"/>
    <property type="molecule type" value="mRNA"/>
</dbReference>
<dbReference type="RefSeq" id="NP_991190.2">
    <molecule id="Q4VSN1-2"/>
    <property type="nucleotide sequence ID" value="NM_205627.2"/>
</dbReference>
<dbReference type="RefSeq" id="XP_005168327.1">
    <molecule id="Q4VSN1-1"/>
    <property type="nucleotide sequence ID" value="XM_005168270.5"/>
</dbReference>
<dbReference type="SMR" id="Q4VSN1"/>
<dbReference type="FunCoup" id="Q4VSN1">
    <property type="interactions" value="1852"/>
</dbReference>
<dbReference type="STRING" id="7955.ENSDARP00000067636"/>
<dbReference type="PaxDb" id="7955-ENSDARP00000097423"/>
<dbReference type="Ensembl" id="ENSDART00000106645">
    <molecule id="Q4VSN1-1"/>
    <property type="protein sequence ID" value="ENSDARP00000097423"/>
    <property type="gene ID" value="ENSDARG00000000853"/>
</dbReference>
<dbReference type="GeneID" id="402922"/>
<dbReference type="KEGG" id="dre:402922"/>
<dbReference type="AGR" id="ZFIN:ZDB-GENE-040826-2"/>
<dbReference type="CTD" id="25778"/>
<dbReference type="ZFIN" id="ZDB-GENE-040826-2">
    <property type="gene designation" value="dstyk"/>
</dbReference>
<dbReference type="eggNOG" id="KOG0192">
    <property type="taxonomic scope" value="Eukaryota"/>
</dbReference>
<dbReference type="HOGENOM" id="CLU_014116_0_0_1"/>
<dbReference type="InParanoid" id="Q4VSN1"/>
<dbReference type="OMA" id="VTRMVWE"/>
<dbReference type="OrthoDB" id="122279at2759"/>
<dbReference type="PhylomeDB" id="Q4VSN1"/>
<dbReference type="TreeFam" id="TF331821"/>
<dbReference type="PRO" id="PR:Q4VSN1"/>
<dbReference type="Proteomes" id="UP000000437">
    <property type="component" value="Chromosome 22"/>
</dbReference>
<dbReference type="Bgee" id="ENSDARG00000000853">
    <property type="expression patterns" value="Expressed in mature ovarian follicle and 31 other cell types or tissues"/>
</dbReference>
<dbReference type="GO" id="GO:0070161">
    <property type="term" value="C:anchoring junction"/>
    <property type="evidence" value="ECO:0007669"/>
    <property type="project" value="UniProtKB-SubCell"/>
</dbReference>
<dbReference type="GO" id="GO:0016324">
    <property type="term" value="C:apical plasma membrane"/>
    <property type="evidence" value="ECO:0007669"/>
    <property type="project" value="UniProtKB-SubCell"/>
</dbReference>
<dbReference type="GO" id="GO:0016323">
    <property type="term" value="C:basolateral plasma membrane"/>
    <property type="evidence" value="ECO:0007669"/>
    <property type="project" value="UniProtKB-SubCell"/>
</dbReference>
<dbReference type="GO" id="GO:0005737">
    <property type="term" value="C:cytoplasm"/>
    <property type="evidence" value="ECO:0000318"/>
    <property type="project" value="GO_Central"/>
</dbReference>
<dbReference type="GO" id="GO:0005524">
    <property type="term" value="F:ATP binding"/>
    <property type="evidence" value="ECO:0007669"/>
    <property type="project" value="UniProtKB-KW"/>
</dbReference>
<dbReference type="GO" id="GO:0106310">
    <property type="term" value="F:protein serine kinase activity"/>
    <property type="evidence" value="ECO:0007669"/>
    <property type="project" value="RHEA"/>
</dbReference>
<dbReference type="GO" id="GO:0004674">
    <property type="term" value="F:protein serine/threonine kinase activity"/>
    <property type="evidence" value="ECO:0007669"/>
    <property type="project" value="UniProtKB-KW"/>
</dbReference>
<dbReference type="GO" id="GO:0004712">
    <property type="term" value="F:protein serine/threonine/tyrosine kinase activity"/>
    <property type="evidence" value="ECO:0007669"/>
    <property type="project" value="UniProtKB-EC"/>
</dbReference>
<dbReference type="GO" id="GO:0004713">
    <property type="term" value="F:protein tyrosine kinase activity"/>
    <property type="evidence" value="ECO:0007669"/>
    <property type="project" value="UniProtKB-KW"/>
</dbReference>
<dbReference type="GO" id="GO:0044344">
    <property type="term" value="P:cellular response to fibroblast growth factor stimulus"/>
    <property type="evidence" value="ECO:0000318"/>
    <property type="project" value="GO_Central"/>
</dbReference>
<dbReference type="GO" id="GO:0048568">
    <property type="term" value="P:embryonic organ development"/>
    <property type="evidence" value="ECO:0000315"/>
    <property type="project" value="UniProtKB"/>
</dbReference>
<dbReference type="GO" id="GO:0043066">
    <property type="term" value="P:negative regulation of apoptotic process"/>
    <property type="evidence" value="ECO:0000318"/>
    <property type="project" value="GO_Central"/>
</dbReference>
<dbReference type="GO" id="GO:0060036">
    <property type="term" value="P:notochord cell vacuolation"/>
    <property type="evidence" value="ECO:0000315"/>
    <property type="project" value="ZFIN"/>
</dbReference>
<dbReference type="GO" id="GO:0048570">
    <property type="term" value="P:notochord morphogenesis"/>
    <property type="evidence" value="ECO:0000315"/>
    <property type="project" value="ZFIN"/>
</dbReference>
<dbReference type="GO" id="GO:0070374">
    <property type="term" value="P:positive regulation of ERK1 and ERK2 cascade"/>
    <property type="evidence" value="ECO:0000318"/>
    <property type="project" value="GO_Central"/>
</dbReference>
<dbReference type="GO" id="GO:0045743">
    <property type="term" value="P:positive regulation of fibroblast growth factor receptor signaling pathway"/>
    <property type="evidence" value="ECO:0000318"/>
    <property type="project" value="GO_Central"/>
</dbReference>
<dbReference type="CDD" id="cd13975">
    <property type="entry name" value="PKc_Dusty"/>
    <property type="match status" value="1"/>
</dbReference>
<dbReference type="FunFam" id="1.10.510.10:FF:000244">
    <property type="entry name" value="Dual serine/threonine and tyrosine protein kinase"/>
    <property type="match status" value="1"/>
</dbReference>
<dbReference type="Gene3D" id="1.10.510.10">
    <property type="entry name" value="Transferase(Phosphotransferase) domain 1"/>
    <property type="match status" value="1"/>
</dbReference>
<dbReference type="InterPro" id="IPR051302">
    <property type="entry name" value="Dual_SerThr-Tyr_Kinase"/>
</dbReference>
<dbReference type="InterPro" id="IPR011009">
    <property type="entry name" value="Kinase-like_dom_sf"/>
</dbReference>
<dbReference type="InterPro" id="IPR000719">
    <property type="entry name" value="Prot_kinase_dom"/>
</dbReference>
<dbReference type="InterPro" id="IPR017441">
    <property type="entry name" value="Protein_kinase_ATP_BS"/>
</dbReference>
<dbReference type="InterPro" id="IPR008271">
    <property type="entry name" value="Ser/Thr_kinase_AS"/>
</dbReference>
<dbReference type="PANTHER" id="PTHR46392">
    <property type="entry name" value="DUAL SERINE/THREONINE AND TYROSINE PROTEIN KINASE"/>
    <property type="match status" value="1"/>
</dbReference>
<dbReference type="PANTHER" id="PTHR46392:SF1">
    <property type="entry name" value="DUAL SERINE_THREONINE AND TYROSINE PROTEIN KINASE"/>
    <property type="match status" value="1"/>
</dbReference>
<dbReference type="Pfam" id="PF00069">
    <property type="entry name" value="Pkinase"/>
    <property type="match status" value="1"/>
</dbReference>
<dbReference type="SMART" id="SM00220">
    <property type="entry name" value="S_TKc"/>
    <property type="match status" value="1"/>
</dbReference>
<dbReference type="SUPFAM" id="SSF56112">
    <property type="entry name" value="Protein kinase-like (PK-like)"/>
    <property type="match status" value="1"/>
</dbReference>
<dbReference type="PROSITE" id="PS00107">
    <property type="entry name" value="PROTEIN_KINASE_ATP"/>
    <property type="match status" value="1"/>
</dbReference>
<dbReference type="PROSITE" id="PS50011">
    <property type="entry name" value="PROTEIN_KINASE_DOM"/>
    <property type="match status" value="1"/>
</dbReference>
<dbReference type="PROSITE" id="PS00108">
    <property type="entry name" value="PROTEIN_KINASE_ST"/>
    <property type="match status" value="1"/>
</dbReference>
<name>DUSTY_DANRE</name>